<organism>
    <name type="scientific">Papio hamadryas</name>
    <name type="common">Hamadryas baboon</name>
    <dbReference type="NCBI Taxonomy" id="9557"/>
    <lineage>
        <taxon>Eukaryota</taxon>
        <taxon>Metazoa</taxon>
        <taxon>Chordata</taxon>
        <taxon>Craniata</taxon>
        <taxon>Vertebrata</taxon>
        <taxon>Euteleostomi</taxon>
        <taxon>Mammalia</taxon>
        <taxon>Eutheria</taxon>
        <taxon>Euarchontoglires</taxon>
        <taxon>Primates</taxon>
        <taxon>Haplorrhini</taxon>
        <taxon>Catarrhini</taxon>
        <taxon>Cercopithecidae</taxon>
        <taxon>Cercopithecinae</taxon>
        <taxon>Papio</taxon>
    </lineage>
</organism>
<protein>
    <recommendedName>
        <fullName>Angiogenin</fullName>
        <ecNumber evidence="1">3.1.27.-</ecNumber>
    </recommendedName>
    <alternativeName>
        <fullName>Ribonuclease 5</fullName>
        <shortName>RNase 5</shortName>
    </alternativeName>
</protein>
<evidence type="ECO:0000250" key="1">
    <source>
        <dbReference type="UniProtKB" id="P03950"/>
    </source>
</evidence>
<evidence type="ECO:0000250" key="2">
    <source>
        <dbReference type="UniProtKB" id="P21570"/>
    </source>
</evidence>
<evidence type="ECO:0000305" key="3"/>
<feature type="signal peptide" evidence="1">
    <location>
        <begin position="1"/>
        <end position="24"/>
    </location>
</feature>
<feature type="chain" id="PRO_0000030847" description="Angiogenin">
    <location>
        <begin position="25"/>
        <end position="146"/>
    </location>
</feature>
<feature type="short sequence motif" description="Nucleolar localization signal" evidence="1">
    <location>
        <begin position="55"/>
        <end position="59"/>
    </location>
</feature>
<feature type="active site" description="Proton acceptor" evidence="1">
    <location>
        <position position="37"/>
    </location>
</feature>
<feature type="active site" description="Proton donor" evidence="1">
    <location>
        <position position="138"/>
    </location>
</feature>
<feature type="binding site" evidence="1">
    <location>
        <position position="45"/>
    </location>
    <ligand>
        <name>tRNA</name>
        <dbReference type="ChEBI" id="CHEBI:17843"/>
    </ligand>
</feature>
<feature type="binding site" evidence="1">
    <location>
        <position position="105"/>
    </location>
    <ligand>
        <name>tRNA</name>
        <dbReference type="ChEBI" id="CHEBI:17843"/>
    </ligand>
</feature>
<feature type="binding site" evidence="1">
    <location>
        <position position="127"/>
    </location>
    <ligand>
        <name>tRNA</name>
        <dbReference type="ChEBI" id="CHEBI:17843"/>
    </ligand>
</feature>
<feature type="modified residue" description="Pyrrolidone carboxylic acid" evidence="1">
    <location>
        <position position="25"/>
    </location>
</feature>
<feature type="disulfide bond" evidence="1">
    <location>
        <begin position="50"/>
        <end position="105"/>
    </location>
</feature>
<feature type="disulfide bond" evidence="1">
    <location>
        <begin position="63"/>
        <end position="116"/>
    </location>
</feature>
<feature type="disulfide bond" evidence="1">
    <location>
        <begin position="81"/>
        <end position="131"/>
    </location>
</feature>
<name>ANGI_PAPHA</name>
<proteinExistence type="inferred from homology"/>
<reference key="1">
    <citation type="journal article" date="2002" name="Mol. Biol. Evol.">
        <title>Diversifying selection of the tumor-growth promoter angiogenin in primate evolution.</title>
        <authorList>
            <person name="Zhang J."/>
            <person name="Rosenberg H.F."/>
        </authorList>
    </citation>
    <scope>NUCLEOTIDE SEQUENCE [GENOMIC DNA]</scope>
</reference>
<sequence>MVMGLGLFLLVFMLGLGLTLPTLAQDNFRYRDFLAKHYDGTPEGRNDRYCESTMRRRHLTSPCKDTNTFIHGNRHHINAICGDENGNPYGGNLRISKSPFQVTTCKLHGGSPRPPCRYRATRGSRNIVVGCENGLPVHLDESIFRP</sequence>
<dbReference type="EC" id="3.1.27.-" evidence="1"/>
<dbReference type="EMBL" id="AF441666">
    <property type="protein sequence ID" value="AAL61648.1"/>
    <property type="molecule type" value="Genomic_DNA"/>
</dbReference>
<dbReference type="SMR" id="Q8WN64"/>
<dbReference type="GO" id="GO:0032311">
    <property type="term" value="C:angiogenin-PRI complex"/>
    <property type="evidence" value="ECO:0000250"/>
    <property type="project" value="UniProtKB"/>
</dbReference>
<dbReference type="GO" id="GO:0005604">
    <property type="term" value="C:basement membrane"/>
    <property type="evidence" value="ECO:0000250"/>
    <property type="project" value="UniProtKB"/>
</dbReference>
<dbReference type="GO" id="GO:0005737">
    <property type="term" value="C:cytoplasm"/>
    <property type="evidence" value="ECO:0000250"/>
    <property type="project" value="UniProtKB"/>
</dbReference>
<dbReference type="GO" id="GO:0010494">
    <property type="term" value="C:cytoplasmic stress granule"/>
    <property type="evidence" value="ECO:0007669"/>
    <property type="project" value="UniProtKB-SubCell"/>
</dbReference>
<dbReference type="GO" id="GO:0030139">
    <property type="term" value="C:endocytic vesicle"/>
    <property type="evidence" value="ECO:0000250"/>
    <property type="project" value="UniProtKB"/>
</dbReference>
<dbReference type="GO" id="GO:0005615">
    <property type="term" value="C:extracellular space"/>
    <property type="evidence" value="ECO:0000250"/>
    <property type="project" value="UniProtKB"/>
</dbReference>
<dbReference type="GO" id="GO:0005730">
    <property type="term" value="C:nucleolus"/>
    <property type="evidence" value="ECO:0000250"/>
    <property type="project" value="UniProtKB"/>
</dbReference>
<dbReference type="GO" id="GO:0005634">
    <property type="term" value="C:nucleus"/>
    <property type="evidence" value="ECO:0000250"/>
    <property type="project" value="UniProtKB"/>
</dbReference>
<dbReference type="GO" id="GO:0003779">
    <property type="term" value="F:actin binding"/>
    <property type="evidence" value="ECO:0000250"/>
    <property type="project" value="UniProtKB"/>
</dbReference>
<dbReference type="GO" id="GO:0005507">
    <property type="term" value="F:copper ion binding"/>
    <property type="evidence" value="ECO:0000250"/>
    <property type="project" value="UniProtKB"/>
</dbReference>
<dbReference type="GO" id="GO:0003677">
    <property type="term" value="F:DNA binding"/>
    <property type="evidence" value="ECO:0007669"/>
    <property type="project" value="UniProtKB-KW"/>
</dbReference>
<dbReference type="GO" id="GO:0004519">
    <property type="term" value="F:endonuclease activity"/>
    <property type="evidence" value="ECO:0007669"/>
    <property type="project" value="UniProtKB-KW"/>
</dbReference>
<dbReference type="GO" id="GO:0008201">
    <property type="term" value="F:heparin binding"/>
    <property type="evidence" value="ECO:0000250"/>
    <property type="project" value="UniProtKB"/>
</dbReference>
<dbReference type="GO" id="GO:0042803">
    <property type="term" value="F:protein homodimerization activity"/>
    <property type="evidence" value="ECO:0000250"/>
    <property type="project" value="UniProtKB"/>
</dbReference>
<dbReference type="GO" id="GO:0004540">
    <property type="term" value="F:RNA nuclease activity"/>
    <property type="evidence" value="ECO:0000250"/>
    <property type="project" value="UniProtKB"/>
</dbReference>
<dbReference type="GO" id="GO:0005102">
    <property type="term" value="F:signaling receptor binding"/>
    <property type="evidence" value="ECO:0000250"/>
    <property type="project" value="UniProtKB"/>
</dbReference>
<dbReference type="GO" id="GO:0004549">
    <property type="term" value="F:tRNA-specific ribonuclease activity"/>
    <property type="evidence" value="ECO:0000250"/>
    <property type="project" value="UniProtKB"/>
</dbReference>
<dbReference type="GO" id="GO:0030041">
    <property type="term" value="P:actin filament polymerization"/>
    <property type="evidence" value="ECO:0000250"/>
    <property type="project" value="UniProtKB"/>
</dbReference>
<dbReference type="GO" id="GO:0001525">
    <property type="term" value="P:angiogenesis"/>
    <property type="evidence" value="ECO:0000250"/>
    <property type="project" value="UniProtKB"/>
</dbReference>
<dbReference type="GO" id="GO:0019731">
    <property type="term" value="P:antibacterial humoral response"/>
    <property type="evidence" value="ECO:0007669"/>
    <property type="project" value="TreeGrafter"/>
</dbReference>
<dbReference type="GO" id="GO:0061844">
    <property type="term" value="P:antimicrobial humoral immune response mediated by antimicrobial peptide"/>
    <property type="evidence" value="ECO:0007669"/>
    <property type="project" value="TreeGrafter"/>
</dbReference>
<dbReference type="GO" id="GO:0050830">
    <property type="term" value="P:defense response to Gram-positive bacterium"/>
    <property type="evidence" value="ECO:0007669"/>
    <property type="project" value="TreeGrafter"/>
</dbReference>
<dbReference type="GO" id="GO:0071425">
    <property type="term" value="P:hematopoietic stem cell proliferation"/>
    <property type="evidence" value="ECO:0000250"/>
    <property type="project" value="UniProtKB"/>
</dbReference>
<dbReference type="GO" id="GO:0045087">
    <property type="term" value="P:innate immune response"/>
    <property type="evidence" value="ECO:0007669"/>
    <property type="project" value="TreeGrafter"/>
</dbReference>
<dbReference type="GO" id="GO:0043066">
    <property type="term" value="P:negative regulation of apoptotic process"/>
    <property type="evidence" value="ECO:0000250"/>
    <property type="project" value="UniProtKB"/>
</dbReference>
<dbReference type="GO" id="GO:0048662">
    <property type="term" value="P:negative regulation of smooth muscle cell proliferation"/>
    <property type="evidence" value="ECO:0000250"/>
    <property type="project" value="UniProtKB"/>
</dbReference>
<dbReference type="GO" id="GO:0032055">
    <property type="term" value="P:negative regulation of translation in response to stress"/>
    <property type="evidence" value="ECO:0000250"/>
    <property type="project" value="UniProtKB"/>
</dbReference>
<dbReference type="GO" id="GO:0001938">
    <property type="term" value="P:positive regulation of endothelial cell proliferation"/>
    <property type="evidence" value="ECO:0000250"/>
    <property type="project" value="UniProtKB"/>
</dbReference>
<dbReference type="GO" id="GO:0050714">
    <property type="term" value="P:positive regulation of protein secretion"/>
    <property type="evidence" value="ECO:0000250"/>
    <property type="project" value="UniProtKB"/>
</dbReference>
<dbReference type="GO" id="GO:0001666">
    <property type="term" value="P:response to hypoxia"/>
    <property type="evidence" value="ECO:0000250"/>
    <property type="project" value="UniProtKB"/>
</dbReference>
<dbReference type="GO" id="GO:0009303">
    <property type="term" value="P:rRNA transcription"/>
    <property type="evidence" value="ECO:0000250"/>
    <property type="project" value="UniProtKB"/>
</dbReference>
<dbReference type="GO" id="GO:0023052">
    <property type="term" value="P:signaling"/>
    <property type="evidence" value="ECO:0000250"/>
    <property type="project" value="UniProtKB"/>
</dbReference>
<dbReference type="GO" id="GO:0034063">
    <property type="term" value="P:stress granule assembly"/>
    <property type="evidence" value="ECO:0000250"/>
    <property type="project" value="UniProtKB"/>
</dbReference>
<dbReference type="CDD" id="cd06265">
    <property type="entry name" value="RNase_A_canonical"/>
    <property type="match status" value="1"/>
</dbReference>
<dbReference type="FunFam" id="3.10.130.10:FF:000001">
    <property type="entry name" value="Ribonuclease pancreatic"/>
    <property type="match status" value="1"/>
</dbReference>
<dbReference type="Gene3D" id="3.10.130.10">
    <property type="entry name" value="Ribonuclease A-like domain"/>
    <property type="match status" value="1"/>
</dbReference>
<dbReference type="InterPro" id="IPR001427">
    <property type="entry name" value="RNaseA"/>
</dbReference>
<dbReference type="InterPro" id="IPR036816">
    <property type="entry name" value="RNaseA-like_dom_sf"/>
</dbReference>
<dbReference type="InterPro" id="IPR023411">
    <property type="entry name" value="RNaseA_AS"/>
</dbReference>
<dbReference type="InterPro" id="IPR023412">
    <property type="entry name" value="RNaseA_domain"/>
</dbReference>
<dbReference type="PANTHER" id="PTHR11437:SF60">
    <property type="entry name" value="ANGIOGENIN"/>
    <property type="match status" value="1"/>
</dbReference>
<dbReference type="PANTHER" id="PTHR11437">
    <property type="entry name" value="RIBONUCLEASE"/>
    <property type="match status" value="1"/>
</dbReference>
<dbReference type="Pfam" id="PF00074">
    <property type="entry name" value="RnaseA"/>
    <property type="match status" value="1"/>
</dbReference>
<dbReference type="PRINTS" id="PR00794">
    <property type="entry name" value="RIBONUCLEASE"/>
</dbReference>
<dbReference type="SMART" id="SM00092">
    <property type="entry name" value="RNAse_Pc"/>
    <property type="match status" value="1"/>
</dbReference>
<dbReference type="SUPFAM" id="SSF54076">
    <property type="entry name" value="RNase A-like"/>
    <property type="match status" value="1"/>
</dbReference>
<dbReference type="PROSITE" id="PS00127">
    <property type="entry name" value="RNASE_PANCREATIC"/>
    <property type="match status" value="1"/>
</dbReference>
<gene>
    <name type="primary">ANG</name>
    <name type="synonym">RNASE5</name>
</gene>
<accession>Q8WN64</accession>
<keyword id="KW-0037">Angiogenesis</keyword>
<keyword id="KW-0963">Cytoplasm</keyword>
<keyword id="KW-0217">Developmental protein</keyword>
<keyword id="KW-0221">Differentiation</keyword>
<keyword id="KW-1015">Disulfide bond</keyword>
<keyword id="KW-0238">DNA-binding</keyword>
<keyword id="KW-0255">Endonuclease</keyword>
<keyword id="KW-0378">Hydrolase</keyword>
<keyword id="KW-0540">Nuclease</keyword>
<keyword id="KW-0539">Nucleus</keyword>
<keyword id="KW-0652">Protein synthesis inhibitor</keyword>
<keyword id="KW-0873">Pyrrolidone carboxylic acid</keyword>
<keyword id="KW-0964">Secreted</keyword>
<keyword id="KW-0732">Signal</keyword>
<keyword id="KW-0346">Stress response</keyword>
<comment type="function">
    <text evidence="1 2">Secreted ribonuclease that can either promote or restrict cell proliferation of target cells, depending on the context. Endocytosed in target cells via its receptor PLXNB2 and translocates to the cytoplasm or nucleus. Under stress conditions, localizes to the cytoplasm and promotes the assembly of stress granules (SGs): specifically cleaves a subset of tRNAs within anticodon loops to produce tRNA-derived stress-induced fragments (tiRNAs), resulting in translation repression and inhibition of cell proliferation (By similarity). tiRNas also prevent formation of apoptosome, thereby promoting cell survival (By similarity). Preferentially cleaves RNAs between a pyrimidine and an adenosine residue, suggesting that it cleaves the anticodon loop of tRNA(Ala) (32-UUAGCAU-38) after positions 33 and 36. Cleaves a subset of tRNAs, including tRNA(Ala), tRNA(Glu), tRNA(Gly), tRNA(Lys), tRNA(Val), tRNA(His), tRNA(Asp) and tRNA(Sec). Under growth conditions and in differentiated cells, translocates to the nucleus and stimulates ribosomal RNA (rRNA) transcription, including that containing the initiation site sequences of 45S rRNA, thereby promoting cell growth and proliferation. Angiogenin induces vascularization of normal and malignant tissues via its ability to promote rRNA transcription. Involved in hematopoietic stem and progenitor cell (HSPC) growth and survival by promoting rRNA transcription in growth conditions and inhibiting translation in response to stress, respectively. Mediates the crosstalk between myeloid and intestinal epithelial cells to protect the intestinal epithelial barrier integrity: secreted by myeloid cells and promotes intestinal epithelial cells proliferation and survival (By similarity). Also mediates osteoclast-endothelial cell crosstalk in growing bone: produced by osteoclasts and protects the neighboring vascular cells against senescence by promoting rRNA transcription (By similarity).</text>
</comment>
<comment type="activity regulation">
    <text evidence="1">Has weak tRNA ribonuclease activity by itself due to partial autoinhibition by its C-terminus, which folds into a short alpha-helix that partially occludes the substrate-binding site. In absence of stress, the ribonuclease activity is inhibited by RNH1 in the cytoplasm. In response to stress, dissociates from RNH1 in the cytoplasm and associates with cytoplasmic ribosomes with vacant A-sites: ribosomes directly activate the tRNA ribonuclease activity of ANG by refolding the C-terminal alpha-helix. In response to stress, the angiogenic activity of ANG is inhibited by RNH1 in the nucleus.</text>
</comment>
<comment type="subunit">
    <text evidence="1">Homodimer. Interacts with RNH1; inhibiting ANG ribonuclease activity. Interacts with PCNA.</text>
</comment>
<comment type="subcellular location">
    <subcellularLocation>
        <location evidence="1">Secreted</location>
    </subcellularLocation>
    <subcellularLocation>
        <location evidence="1">Nucleus</location>
    </subcellularLocation>
    <subcellularLocation>
        <location evidence="1">Nucleus</location>
        <location evidence="1">Nucleolus</location>
    </subcellularLocation>
    <subcellularLocation>
        <location evidence="1">Cytoplasm</location>
        <location evidence="1">Stress granule</location>
    </subcellularLocation>
    <text evidence="1">The secreted protein is rapidly endocytosed by target cells following interaction with PLXNB2 receptor and translocated to the cytoplasm and nucleus. In the nucleus, accumulates in the nucleolus and binds to DNA.</text>
</comment>
<comment type="similarity">
    <text evidence="3">Belongs to the pancreatic ribonuclease family.</text>
</comment>